<proteinExistence type="evidence at transcript level"/>
<comment type="function">
    <text evidence="2">May participate in leucine metabolism. May transport leucine or a compound related to leucine metabolism.</text>
</comment>
<comment type="subcellular location">
    <subcellularLocation>
        <location evidence="3">Cell membrane</location>
        <topology evidence="1">Multi-pass membrane protein</topology>
    </subcellularLocation>
</comment>
<comment type="induction">
    <text evidence="2">Induced in response to leucine limitation. Regulated via the T box transcriptional antitermination system.</text>
</comment>
<comment type="disruption phenotype">
    <text evidence="2">No growth phenotype is observed for the knockout strain.</text>
</comment>
<comment type="similarity">
    <text evidence="3">Belongs to the amino acid-polyamine-organocation (APC) superfamily.</text>
</comment>
<organism>
    <name type="scientific">Bacillus subtilis (strain 168)</name>
    <dbReference type="NCBI Taxonomy" id="224308"/>
    <lineage>
        <taxon>Bacteria</taxon>
        <taxon>Bacillati</taxon>
        <taxon>Bacillota</taxon>
        <taxon>Bacilli</taxon>
        <taxon>Bacillales</taxon>
        <taxon>Bacillaceae</taxon>
        <taxon>Bacillus</taxon>
    </lineage>
</organism>
<keyword id="KW-0029">Amino-acid transport</keyword>
<keyword id="KW-1003">Cell membrane</keyword>
<keyword id="KW-0472">Membrane</keyword>
<keyword id="KW-1185">Reference proteome</keyword>
<keyword id="KW-0812">Transmembrane</keyword>
<keyword id="KW-1133">Transmembrane helix</keyword>
<keyword id="KW-0813">Transport</keyword>
<protein>
    <recommendedName>
        <fullName>Uncharacterized amino acid permease YvbW</fullName>
    </recommendedName>
</protein>
<sequence length="447" mass="49178">MKNDNQTLKRTMTSRHIMMMALGGAIGAGLFKGSSSAIDVAGPSVIIAYLLGGIILLFIMQGLAEMAVRNRNARTFRDLVQQVLGNYAAYFLDWIYWKMWVLNIAAEAVVAAIFIQYWLPGCPIWVLALGISLIVTIVNLLSVKIFAETEYWLAMIKITVIIIFIILGLLLLFVSFGDHTASGFSNLTDHGGFFPHGGTGLITAMLVVIYSYGGTEIIGVTLAETKNPEKVVPKAVRSTLTRIVAFYLLPFFIIVSLIPWNQVNSVPESPFVMVFKMVGIPGADHIMNAVILLAIISSMNSGLYGSSRILYTQASDGRLPKVFSKLSSKNVPMFAILMCTSSLYIGVLISLFAGSQTFNYLMGSLGYTVLFIWLIIGFAHLKSRKQQTETPAYYVKWFPYTTWFAIVALLAILIGVIMTTSIVITGITAAIYLLITVAYLVKGRKHQ</sequence>
<feature type="chain" id="PRO_0000376831" description="Uncharacterized amino acid permease YvbW">
    <location>
        <begin position="1"/>
        <end position="447"/>
    </location>
</feature>
<feature type="transmembrane region" description="Helical" evidence="1">
    <location>
        <begin position="17"/>
        <end position="37"/>
    </location>
</feature>
<feature type="transmembrane region" description="Helical" evidence="1">
    <location>
        <begin position="40"/>
        <end position="60"/>
    </location>
</feature>
<feature type="transmembrane region" description="Helical" evidence="1">
    <location>
        <begin position="95"/>
        <end position="115"/>
    </location>
</feature>
<feature type="transmembrane region" description="Helical" evidence="1">
    <location>
        <begin position="118"/>
        <end position="138"/>
    </location>
</feature>
<feature type="transmembrane region" description="Helical" evidence="1">
    <location>
        <begin position="154"/>
        <end position="174"/>
    </location>
</feature>
<feature type="transmembrane region" description="Helical" evidence="1">
    <location>
        <begin position="200"/>
        <end position="220"/>
    </location>
</feature>
<feature type="transmembrane region" description="Helical" evidence="1">
    <location>
        <begin position="243"/>
        <end position="263"/>
    </location>
</feature>
<feature type="transmembrane region" description="Helical" evidence="1">
    <location>
        <begin position="289"/>
        <end position="311"/>
    </location>
</feature>
<feature type="transmembrane region" description="Helical" evidence="1">
    <location>
        <begin position="333"/>
        <end position="353"/>
    </location>
</feature>
<feature type="transmembrane region" description="Helical" evidence="1">
    <location>
        <begin position="361"/>
        <end position="381"/>
    </location>
</feature>
<feature type="transmembrane region" description="Helical" evidence="1">
    <location>
        <begin position="393"/>
        <end position="415"/>
    </location>
</feature>
<feature type="transmembrane region" description="Helical" evidence="1">
    <location>
        <begin position="419"/>
        <end position="441"/>
    </location>
</feature>
<evidence type="ECO:0000255" key="1"/>
<evidence type="ECO:0000269" key="2">
    <source ref="2"/>
</evidence>
<evidence type="ECO:0000305" key="3"/>
<gene>
    <name type="primary">yvbW</name>
    <name type="ordered locus">BSU34010</name>
</gene>
<accession>O32257</accession>
<name>YVBW_BACSU</name>
<dbReference type="EMBL" id="AL009126">
    <property type="protein sequence ID" value="CAB15406.1"/>
    <property type="molecule type" value="Genomic_DNA"/>
</dbReference>
<dbReference type="PIR" id="G70030">
    <property type="entry name" value="G70030"/>
</dbReference>
<dbReference type="RefSeq" id="NP_391281.1">
    <property type="nucleotide sequence ID" value="NC_000964.3"/>
</dbReference>
<dbReference type="RefSeq" id="WP_003228313.1">
    <property type="nucleotide sequence ID" value="NZ_OZ025638.1"/>
</dbReference>
<dbReference type="SMR" id="O32257"/>
<dbReference type="FunCoup" id="O32257">
    <property type="interactions" value="153"/>
</dbReference>
<dbReference type="IntAct" id="O32257">
    <property type="interactions" value="1"/>
</dbReference>
<dbReference type="STRING" id="224308.BSU34010"/>
<dbReference type="PaxDb" id="224308-BSU34010"/>
<dbReference type="EnsemblBacteria" id="CAB15406">
    <property type="protein sequence ID" value="CAB15406"/>
    <property type="gene ID" value="BSU_34010"/>
</dbReference>
<dbReference type="GeneID" id="936289"/>
<dbReference type="KEGG" id="bsu:BSU34010"/>
<dbReference type="PATRIC" id="fig|224308.179.peg.3687"/>
<dbReference type="eggNOG" id="COG1113">
    <property type="taxonomic scope" value="Bacteria"/>
</dbReference>
<dbReference type="InParanoid" id="O32257"/>
<dbReference type="OrthoDB" id="9780162at2"/>
<dbReference type="PhylomeDB" id="O32257"/>
<dbReference type="BioCyc" id="BSUB:BSU34010-MONOMER"/>
<dbReference type="Proteomes" id="UP000001570">
    <property type="component" value="Chromosome"/>
</dbReference>
<dbReference type="GO" id="GO:0016020">
    <property type="term" value="C:membrane"/>
    <property type="evidence" value="ECO:0000318"/>
    <property type="project" value="GO_Central"/>
</dbReference>
<dbReference type="GO" id="GO:0005886">
    <property type="term" value="C:plasma membrane"/>
    <property type="evidence" value="ECO:0007669"/>
    <property type="project" value="UniProtKB-SubCell"/>
</dbReference>
<dbReference type="GO" id="GO:0015171">
    <property type="term" value="F:amino acid transmembrane transporter activity"/>
    <property type="evidence" value="ECO:0000318"/>
    <property type="project" value="GO_Central"/>
</dbReference>
<dbReference type="GO" id="GO:0003333">
    <property type="term" value="P:amino acid transmembrane transport"/>
    <property type="evidence" value="ECO:0000318"/>
    <property type="project" value="GO_Central"/>
</dbReference>
<dbReference type="FunFam" id="1.20.1740.10:FF:000001">
    <property type="entry name" value="Amino acid permease"/>
    <property type="match status" value="1"/>
</dbReference>
<dbReference type="Gene3D" id="1.20.1740.10">
    <property type="entry name" value="Amino acid/polyamine transporter I"/>
    <property type="match status" value="1"/>
</dbReference>
<dbReference type="InterPro" id="IPR004841">
    <property type="entry name" value="AA-permease/SLC12A_dom"/>
</dbReference>
<dbReference type="PANTHER" id="PTHR43495">
    <property type="entry name" value="GABA PERMEASE"/>
    <property type="match status" value="1"/>
</dbReference>
<dbReference type="PANTHER" id="PTHR43495:SF5">
    <property type="entry name" value="GAMMA-AMINOBUTYRIC ACID PERMEASE"/>
    <property type="match status" value="1"/>
</dbReference>
<dbReference type="Pfam" id="PF00324">
    <property type="entry name" value="AA_permease"/>
    <property type="match status" value="1"/>
</dbReference>
<dbReference type="PIRSF" id="PIRSF006060">
    <property type="entry name" value="AA_transporter"/>
    <property type="match status" value="1"/>
</dbReference>
<reference key="1">
    <citation type="journal article" date="1997" name="Nature">
        <title>The complete genome sequence of the Gram-positive bacterium Bacillus subtilis.</title>
        <authorList>
            <person name="Kunst F."/>
            <person name="Ogasawara N."/>
            <person name="Moszer I."/>
            <person name="Albertini A.M."/>
            <person name="Alloni G."/>
            <person name="Azevedo V."/>
            <person name="Bertero M.G."/>
            <person name="Bessieres P."/>
            <person name="Bolotin A."/>
            <person name="Borchert S."/>
            <person name="Borriss R."/>
            <person name="Boursier L."/>
            <person name="Brans A."/>
            <person name="Braun M."/>
            <person name="Brignell S.C."/>
            <person name="Bron S."/>
            <person name="Brouillet S."/>
            <person name="Bruschi C.V."/>
            <person name="Caldwell B."/>
            <person name="Capuano V."/>
            <person name="Carter N.M."/>
            <person name="Choi S.-K."/>
            <person name="Codani J.-J."/>
            <person name="Connerton I.F."/>
            <person name="Cummings N.J."/>
            <person name="Daniel R.A."/>
            <person name="Denizot F."/>
            <person name="Devine K.M."/>
            <person name="Duesterhoeft A."/>
            <person name="Ehrlich S.D."/>
            <person name="Emmerson P.T."/>
            <person name="Entian K.-D."/>
            <person name="Errington J."/>
            <person name="Fabret C."/>
            <person name="Ferrari E."/>
            <person name="Foulger D."/>
            <person name="Fritz C."/>
            <person name="Fujita M."/>
            <person name="Fujita Y."/>
            <person name="Fuma S."/>
            <person name="Galizzi A."/>
            <person name="Galleron N."/>
            <person name="Ghim S.-Y."/>
            <person name="Glaser P."/>
            <person name="Goffeau A."/>
            <person name="Golightly E.J."/>
            <person name="Grandi G."/>
            <person name="Guiseppi G."/>
            <person name="Guy B.J."/>
            <person name="Haga K."/>
            <person name="Haiech J."/>
            <person name="Harwood C.R."/>
            <person name="Henaut A."/>
            <person name="Hilbert H."/>
            <person name="Holsappel S."/>
            <person name="Hosono S."/>
            <person name="Hullo M.-F."/>
            <person name="Itaya M."/>
            <person name="Jones L.-M."/>
            <person name="Joris B."/>
            <person name="Karamata D."/>
            <person name="Kasahara Y."/>
            <person name="Klaerr-Blanchard M."/>
            <person name="Klein C."/>
            <person name="Kobayashi Y."/>
            <person name="Koetter P."/>
            <person name="Koningstein G."/>
            <person name="Krogh S."/>
            <person name="Kumano M."/>
            <person name="Kurita K."/>
            <person name="Lapidus A."/>
            <person name="Lardinois S."/>
            <person name="Lauber J."/>
            <person name="Lazarevic V."/>
            <person name="Lee S.-M."/>
            <person name="Levine A."/>
            <person name="Liu H."/>
            <person name="Masuda S."/>
            <person name="Mauel C."/>
            <person name="Medigue C."/>
            <person name="Medina N."/>
            <person name="Mellado R.P."/>
            <person name="Mizuno M."/>
            <person name="Moestl D."/>
            <person name="Nakai S."/>
            <person name="Noback M."/>
            <person name="Noone D."/>
            <person name="O'Reilly M."/>
            <person name="Ogawa K."/>
            <person name="Ogiwara A."/>
            <person name="Oudega B."/>
            <person name="Park S.-H."/>
            <person name="Parro V."/>
            <person name="Pohl T.M."/>
            <person name="Portetelle D."/>
            <person name="Porwollik S."/>
            <person name="Prescott A.M."/>
            <person name="Presecan E."/>
            <person name="Pujic P."/>
            <person name="Purnelle B."/>
            <person name="Rapoport G."/>
            <person name="Rey M."/>
            <person name="Reynolds S."/>
            <person name="Rieger M."/>
            <person name="Rivolta C."/>
            <person name="Rocha E."/>
            <person name="Roche B."/>
            <person name="Rose M."/>
            <person name="Sadaie Y."/>
            <person name="Sato T."/>
            <person name="Scanlan E."/>
            <person name="Schleich S."/>
            <person name="Schroeter R."/>
            <person name="Scoffone F."/>
            <person name="Sekiguchi J."/>
            <person name="Sekowska A."/>
            <person name="Seror S.J."/>
            <person name="Serror P."/>
            <person name="Shin B.-S."/>
            <person name="Soldo B."/>
            <person name="Sorokin A."/>
            <person name="Tacconi E."/>
            <person name="Takagi T."/>
            <person name="Takahashi H."/>
            <person name="Takemaru K."/>
            <person name="Takeuchi M."/>
            <person name="Tamakoshi A."/>
            <person name="Tanaka T."/>
            <person name="Terpstra P."/>
            <person name="Tognoni A."/>
            <person name="Tosato V."/>
            <person name="Uchiyama S."/>
            <person name="Vandenbol M."/>
            <person name="Vannier F."/>
            <person name="Vassarotti A."/>
            <person name="Viari A."/>
            <person name="Wambutt R."/>
            <person name="Wedler E."/>
            <person name="Wedler H."/>
            <person name="Weitzenegger T."/>
            <person name="Winters P."/>
            <person name="Wipat A."/>
            <person name="Yamamoto H."/>
            <person name="Yamane K."/>
            <person name="Yasumoto K."/>
            <person name="Yata K."/>
            <person name="Yoshida K."/>
            <person name="Yoshikawa H.-F."/>
            <person name="Zumstein E."/>
            <person name="Yoshikawa H."/>
            <person name="Danchin A."/>
        </authorList>
    </citation>
    <scope>NUCLEOTIDE SEQUENCE [LARGE SCALE GENOMIC DNA]</scope>
    <source>
        <strain>168</strain>
    </source>
</reference>
<reference key="2">
    <citation type="journal article" date="2014" name="Adv. Microbiol.">
        <title>Induced transcriptional expression of Bacillus subtilis amino acid permease yvbW in response to leucine limitation.</title>
        <authorList>
            <person name="Rollins S.M."/>
        </authorList>
    </citation>
    <scope>FUNCTION</scope>
    <scope>INDUCTION</scope>
    <scope>DISRUPTION PHENOTYPE</scope>
</reference>